<name>TYRP_ASPTN</name>
<gene>
    <name evidence="7" type="primary">tyrP</name>
    <name evidence="8" type="synonym">melB</name>
    <name type="ORF">ATEG_03564</name>
</gene>
<comment type="function">
    <text evidence="4 5 6">Tyrosinase; part of the gene cluster that mediates the biosynthesis of Asp-melanin, a pigment that confers resistance against UV light and hampers phagocytosis by soil amoeba (PubMed:27133313, PubMed:28791090, PubMed:29270299). The nonribosomal peptide synthase melA converts 4-hydroxyphenylpyruvate (4-HPPA) to aspulvinone E (PubMed:27133313, PubMed:29270299). The tyrosinase tyrP then performs hydroxylations of both aromatic moieties of aspulvinone E (PubMed:27133313). The product of tyrP is highly unstable, and, due to the high reactivity of methides and ortho-diquinones, the polymeric Asp-melanin forms spontaneously (PubMed:27133313).</text>
</comment>
<comment type="catalytic activity">
    <reaction evidence="4">
        <text>aspulvinone E + O2 = (5Z)-3-(3,4-dihydroxyphenyl)-5-[(3,4-dihydroxyphenyl)methylidene]-5-oxo-2,5-dihydrofuran-3-olate</text>
        <dbReference type="Rhea" id="RHEA:74195"/>
        <dbReference type="ChEBI" id="CHEBI:15379"/>
        <dbReference type="ChEBI" id="CHEBI:58240"/>
        <dbReference type="ChEBI" id="CHEBI:193114"/>
    </reaction>
    <physiologicalReaction direction="left-to-right" evidence="4">
        <dbReference type="Rhea" id="RHEA:74196"/>
    </physiologicalReaction>
</comment>
<comment type="catalytic activity">
    <reaction evidence="4">
        <text>aspulvinone E + O2 = (2Z)-2-[(3,4-dioxocyclohexa-1,5-dien-1-yl)methylidene]-4-(4-hydroxyphenyl)-5-oxo-2,5-dihydrofuran-3-olate + H2O</text>
        <dbReference type="Rhea" id="RHEA:74199"/>
        <dbReference type="ChEBI" id="CHEBI:15377"/>
        <dbReference type="ChEBI" id="CHEBI:15379"/>
        <dbReference type="ChEBI" id="CHEBI:58240"/>
        <dbReference type="ChEBI" id="CHEBI:193115"/>
    </reaction>
    <physiologicalReaction direction="left-to-right" evidence="4">
        <dbReference type="Rhea" id="RHEA:74200"/>
    </physiologicalReaction>
</comment>
<comment type="cofactor">
    <cofactor evidence="1">
        <name>Cu(2+)</name>
        <dbReference type="ChEBI" id="CHEBI:29036"/>
    </cofactor>
    <text evidence="1">Binds 2 copper ions per subunit.</text>
</comment>
<comment type="activity regulation">
    <text evidence="4">Activity is inhibited by the presence of dithiothreitol (DTT).</text>
</comment>
<comment type="biophysicochemical properties">
    <phDependence>
        <text evidence="4">Optimum pH is 5-7.</text>
    </phDependence>
</comment>
<comment type="pathway">
    <text evidence="4 5">Secondary metabolite biosynthesis.</text>
</comment>
<comment type="subcellular location">
    <subcellularLocation>
        <location evidence="4 6">Endoplasmic reticulum lumen</location>
    </subcellularLocation>
    <subcellularLocation>
        <location evidence="4 6">Golgi apparatus lumen</location>
    </subcellularLocation>
    <text evidence="6">The oxidizing environment of Golgi or endoplasmic reticulum (ER) is required for tyrP to be active.</text>
</comment>
<comment type="induction">
    <text evidence="4">Expression is induced during conidiation.</text>
</comment>
<comment type="PTM">
    <text evidence="4">Glycosylated.</text>
</comment>
<comment type="disruption phenotype">
    <text evidence="4 5">Impairs the production of Asp-melanin (PubMed:28791090). Results in yellow fluorescent conidia and accumulates aspulvinone E in conidia (PubMed:27133313).</text>
</comment>
<comment type="similarity">
    <text evidence="9">Belongs to the tyrosinase family.</text>
</comment>
<comment type="sequence caution" evidence="9">
    <conflict type="erroneous gene model prediction">
        <sequence resource="EMBL-CDS" id="EAU36838"/>
    </conflict>
</comment>
<reference key="1">
    <citation type="submission" date="2005-09" db="EMBL/GenBank/DDBJ databases">
        <title>Annotation of the Aspergillus terreus NIH2624 genome.</title>
        <authorList>
            <person name="Birren B.W."/>
            <person name="Lander E.S."/>
            <person name="Galagan J.E."/>
            <person name="Nusbaum C."/>
            <person name="Devon K."/>
            <person name="Henn M."/>
            <person name="Ma L.-J."/>
            <person name="Jaffe D.B."/>
            <person name="Butler J."/>
            <person name="Alvarez P."/>
            <person name="Gnerre S."/>
            <person name="Grabherr M."/>
            <person name="Kleber M."/>
            <person name="Mauceli E.W."/>
            <person name="Brockman W."/>
            <person name="Rounsley S."/>
            <person name="Young S.K."/>
            <person name="LaButti K."/>
            <person name="Pushparaj V."/>
            <person name="DeCaprio D."/>
            <person name="Crawford M."/>
            <person name="Koehrsen M."/>
            <person name="Engels R."/>
            <person name="Montgomery P."/>
            <person name="Pearson M."/>
            <person name="Howarth C."/>
            <person name="Larson L."/>
            <person name="Luoma S."/>
            <person name="White J."/>
            <person name="Alvarado L."/>
            <person name="Kodira C.D."/>
            <person name="Zeng Q."/>
            <person name="Oleary S."/>
            <person name="Yandava C."/>
            <person name="Denning D.W."/>
            <person name="Nierman W.C."/>
            <person name="Milne T."/>
            <person name="Madden K."/>
        </authorList>
    </citation>
    <scope>NUCLEOTIDE SEQUENCE [LARGE SCALE GENOMIC DNA]</scope>
    <source>
        <strain>NIH 2624 / FGSC A1156</strain>
    </source>
</reference>
<reference key="2">
    <citation type="journal article" date="2015" name="Chem. Sci.">
        <title>Spatial regulation of a common precursor from two distinct genes generates metabolite diversity.</title>
        <authorList>
            <person name="Guo C.J."/>
            <person name="Sun W.W."/>
            <person name="Bruno K.S."/>
            <person name="Oakley B.R."/>
            <person name="Keller N.P."/>
            <person name="Wang C.C.C."/>
        </authorList>
    </citation>
    <scope>FUNCTION</scope>
    <scope>DISRUPTION PHENOTYPE</scope>
    <scope>PATHWAY</scope>
</reference>
<reference key="3">
    <citation type="journal article" date="2016" name="Cell Chem. Biol.">
        <title>A non-canonical melanin biosynthesis pathway protects Aspergillus terreus conidia from environmental stress.</title>
        <authorList>
            <person name="Geib E."/>
            <person name="Gressler M."/>
            <person name="Viediernikova I."/>
            <person name="Hillmann F."/>
            <person name="Jacobsen I.D."/>
            <person name="Nietzsche S."/>
            <person name="Hertweck C."/>
            <person name="Brock M."/>
        </authorList>
    </citation>
    <scope>INDUCTION</scope>
    <scope>DISRUPTION PHENOTYPE</scope>
    <scope>SUBCELLULAR LOCATION</scope>
    <scope>GLYCOSYLATION</scope>
    <scope>FUNCTION</scope>
    <scope>CATALYTIC ACTIVITY</scope>
    <scope>BIOPHYSICOCHEMICAL PROPERTIES</scope>
    <scope>ACTIVITY REGULATION</scope>
    <scope>PATHWAY</scope>
</reference>
<reference key="4">
    <citation type="journal article" date="2017" name="Fungal Biol. Biotechnol.">
        <title>ATNT: an enhanced system for expression of polycistronic secondary metabolite gene clusters in Aspergillus niger.</title>
        <authorList>
            <person name="Geib E."/>
            <person name="Brock M."/>
        </authorList>
    </citation>
    <scope>FUNCTION</scope>
    <scope>SUBCELLULAR LOCATION</scope>
</reference>
<protein>
    <recommendedName>
        <fullName evidence="7">Tyrosinase P</fullName>
        <ecNumber evidence="4">1.14.18.-</ecNumber>
    </recommendedName>
    <alternativeName>
        <fullName evidence="8">Melanin biosynthesis protein B</fullName>
    </alternativeName>
</protein>
<proteinExistence type="evidence at protein level"/>
<sequence>MGFYRNLVLVAASCTQALGLCPAPRCDSPDIRHEWGELSREDRLSYISAVQCMKDRPPELSVEEVPAVRSRYDDFTAVHINYTLQIHNSGIFLPWHRHFIWLWEKALREECGFTGTLPYWDWVMWPNLAASPLFDGTETSLSGDGEFNATEQPTELNPEPGLTITIPRGAGGGCVRTGPFKDWVINMGPFAFNESYEPALPDHAFDYNPRCLVRSLNDWVIQTYNNQTVVDTLLDSPDIVEFQNIMGGFPNPPIPIGPHAMGHRSLGPDMLDFFASPQDPAFWQHHGMVDRLWTVWQDADEPWRRFALNGSSTTWYKDDTPEVTLQTTVEFGILDEPRPLYELMSPTAGPYCYTYT</sequence>
<organism>
    <name type="scientific">Aspergillus terreus (strain NIH 2624 / FGSC A1156)</name>
    <dbReference type="NCBI Taxonomy" id="341663"/>
    <lineage>
        <taxon>Eukaryota</taxon>
        <taxon>Fungi</taxon>
        <taxon>Dikarya</taxon>
        <taxon>Ascomycota</taxon>
        <taxon>Pezizomycotina</taxon>
        <taxon>Eurotiomycetes</taxon>
        <taxon>Eurotiomycetidae</taxon>
        <taxon>Eurotiales</taxon>
        <taxon>Aspergillaceae</taxon>
        <taxon>Aspergillus</taxon>
        <taxon>Aspergillus subgen. Circumdati</taxon>
    </lineage>
</organism>
<keyword id="KW-0186">Copper</keyword>
<keyword id="KW-0256">Endoplasmic reticulum</keyword>
<keyword id="KW-0325">Glycoprotein</keyword>
<keyword id="KW-0333">Golgi apparatus</keyword>
<keyword id="KW-0479">Metal-binding</keyword>
<keyword id="KW-0560">Oxidoreductase</keyword>
<keyword id="KW-1185">Reference proteome</keyword>
<keyword id="KW-0732">Signal</keyword>
<dbReference type="EC" id="1.14.18.-" evidence="4"/>
<dbReference type="EMBL" id="CH476597">
    <property type="protein sequence ID" value="EAU36838.1"/>
    <property type="status" value="ALT_SEQ"/>
    <property type="molecule type" value="Genomic_DNA"/>
</dbReference>
<dbReference type="RefSeq" id="XP_001212742.1">
    <property type="nucleotide sequence ID" value="XM_001212742.1"/>
</dbReference>
<dbReference type="SMR" id="Q0CRX0"/>
<dbReference type="STRING" id="341663.Q0CRX0"/>
<dbReference type="GlyCosmos" id="Q0CRX0">
    <property type="glycosylation" value="5 sites, No reported glycans"/>
</dbReference>
<dbReference type="EnsemblFungi" id="EAU36838">
    <property type="protein sequence ID" value="EAU36838"/>
    <property type="gene ID" value="ATEG_03564"/>
</dbReference>
<dbReference type="GeneID" id="4317933"/>
<dbReference type="HOGENOM" id="CLU_035914_0_2_1"/>
<dbReference type="OrthoDB" id="6132182at2759"/>
<dbReference type="Proteomes" id="UP000007963">
    <property type="component" value="Unassembled WGS sequence"/>
</dbReference>
<dbReference type="GO" id="GO:0005788">
    <property type="term" value="C:endoplasmic reticulum lumen"/>
    <property type="evidence" value="ECO:0007669"/>
    <property type="project" value="UniProtKB-SubCell"/>
</dbReference>
<dbReference type="GO" id="GO:0005796">
    <property type="term" value="C:Golgi lumen"/>
    <property type="evidence" value="ECO:0007669"/>
    <property type="project" value="UniProtKB-SubCell"/>
</dbReference>
<dbReference type="GO" id="GO:0046872">
    <property type="term" value="F:metal ion binding"/>
    <property type="evidence" value="ECO:0007669"/>
    <property type="project" value="UniProtKB-KW"/>
</dbReference>
<dbReference type="GO" id="GO:0016491">
    <property type="term" value="F:oxidoreductase activity"/>
    <property type="evidence" value="ECO:0007669"/>
    <property type="project" value="UniProtKB-KW"/>
</dbReference>
<dbReference type="Gene3D" id="1.10.1280.10">
    <property type="entry name" value="Di-copper center containing domain from catechol oxidase"/>
    <property type="match status" value="1"/>
</dbReference>
<dbReference type="InterPro" id="IPR008922">
    <property type="entry name" value="Di-copper_centre_dom_sf"/>
</dbReference>
<dbReference type="InterPro" id="IPR050316">
    <property type="entry name" value="Tyrosinase/Hemocyanin"/>
</dbReference>
<dbReference type="InterPro" id="IPR002227">
    <property type="entry name" value="Tyrosinase_Cu-bd"/>
</dbReference>
<dbReference type="PANTHER" id="PTHR11474:SF125">
    <property type="entry name" value="N-ACETYL-6-HYDROXYTRYPTOPHAN OXIDASE IVOB-RELATED"/>
    <property type="match status" value="1"/>
</dbReference>
<dbReference type="PANTHER" id="PTHR11474">
    <property type="entry name" value="TYROSINASE FAMILY MEMBER"/>
    <property type="match status" value="1"/>
</dbReference>
<dbReference type="Pfam" id="PF00264">
    <property type="entry name" value="Tyrosinase"/>
    <property type="match status" value="1"/>
</dbReference>
<dbReference type="PRINTS" id="PR00092">
    <property type="entry name" value="TYROSINASE"/>
</dbReference>
<dbReference type="SUPFAM" id="SSF48056">
    <property type="entry name" value="Di-copper centre-containing domain"/>
    <property type="match status" value="1"/>
</dbReference>
<dbReference type="PROSITE" id="PS00498">
    <property type="entry name" value="TYROSINASE_2"/>
    <property type="match status" value="1"/>
</dbReference>
<evidence type="ECO:0000250" key="1">
    <source>
        <dbReference type="UniProtKB" id="Q9ZP19"/>
    </source>
</evidence>
<evidence type="ECO:0000255" key="2"/>
<evidence type="ECO:0000255" key="3">
    <source>
        <dbReference type="PROSITE-ProRule" id="PRU00498"/>
    </source>
</evidence>
<evidence type="ECO:0000269" key="4">
    <source>
    </source>
</evidence>
<evidence type="ECO:0000269" key="5">
    <source>
    </source>
</evidence>
<evidence type="ECO:0000269" key="6">
    <source>
    </source>
</evidence>
<evidence type="ECO:0000303" key="7">
    <source>
    </source>
</evidence>
<evidence type="ECO:0000303" key="8">
    <source>
    </source>
</evidence>
<evidence type="ECO:0000305" key="9"/>
<accession>Q0CRX0</accession>
<feature type="signal peptide" evidence="2">
    <location>
        <begin position="1"/>
        <end position="19"/>
    </location>
</feature>
<feature type="chain" id="PRO_0000448623" description="Tyrosinase P" evidence="2">
    <location>
        <begin position="20"/>
        <end position="356"/>
    </location>
</feature>
<feature type="binding site" evidence="1">
    <location>
        <position position="87"/>
    </location>
    <ligand>
        <name>Cu cation</name>
        <dbReference type="ChEBI" id="CHEBI:23378"/>
        <label>A</label>
    </ligand>
</feature>
<feature type="binding site" evidence="1">
    <location>
        <position position="96"/>
    </location>
    <ligand>
        <name>Cu cation</name>
        <dbReference type="ChEBI" id="CHEBI:23378"/>
        <label>A</label>
    </ligand>
</feature>
<feature type="binding site" evidence="1">
    <location>
        <position position="203"/>
    </location>
    <ligand>
        <name>Cu cation</name>
        <dbReference type="ChEBI" id="CHEBI:23378"/>
        <label>B</label>
    </ligand>
</feature>
<feature type="binding site" evidence="1">
    <location>
        <position position="263"/>
    </location>
    <ligand>
        <name>Cu cation</name>
        <dbReference type="ChEBI" id="CHEBI:23378"/>
        <label>B</label>
    </ligand>
</feature>
<feature type="binding site" evidence="1">
    <location>
        <position position="286"/>
    </location>
    <ligand>
        <name>Cu cation</name>
        <dbReference type="ChEBI" id="CHEBI:23378"/>
        <label>B</label>
    </ligand>
</feature>
<feature type="glycosylation site" description="N-linked (GlcNAc...) asparagine" evidence="3">
    <location>
        <position position="81"/>
    </location>
</feature>
<feature type="glycosylation site" description="N-linked (GlcNAc...) asparagine" evidence="3">
    <location>
        <position position="148"/>
    </location>
</feature>
<feature type="glycosylation site" description="N-linked (GlcNAc...) asparagine" evidence="3">
    <location>
        <position position="193"/>
    </location>
</feature>
<feature type="glycosylation site" description="N-linked (GlcNAc...) asparagine" evidence="3">
    <location>
        <position position="226"/>
    </location>
</feature>
<feature type="glycosylation site" description="N-linked (GlcNAc...) asparagine" evidence="3">
    <location>
        <position position="309"/>
    </location>
</feature>